<protein>
    <recommendedName>
        <fullName evidence="1">UPF0434 protein YcaR</fullName>
    </recommendedName>
</protein>
<name>YCAR_ECO7I</name>
<comment type="similarity">
    <text evidence="1">Belongs to the UPF0434 family.</text>
</comment>
<dbReference type="EMBL" id="CU928164">
    <property type="protein sequence ID" value="CAR18357.1"/>
    <property type="molecule type" value="Genomic_DNA"/>
</dbReference>
<dbReference type="RefSeq" id="WP_000350058.1">
    <property type="nucleotide sequence ID" value="NC_011750.1"/>
</dbReference>
<dbReference type="RefSeq" id="YP_002408193.1">
    <property type="nucleotide sequence ID" value="NC_011750.1"/>
</dbReference>
<dbReference type="SMR" id="B7NM57"/>
<dbReference type="STRING" id="585057.ECIAI39_2230"/>
<dbReference type="GeneID" id="93776498"/>
<dbReference type="KEGG" id="ect:ECIAI39_2230"/>
<dbReference type="PATRIC" id="fig|585057.6.peg.2323"/>
<dbReference type="HOGENOM" id="CLU_155659_3_1_6"/>
<dbReference type="Proteomes" id="UP000000749">
    <property type="component" value="Chromosome"/>
</dbReference>
<dbReference type="GO" id="GO:0005829">
    <property type="term" value="C:cytosol"/>
    <property type="evidence" value="ECO:0007669"/>
    <property type="project" value="TreeGrafter"/>
</dbReference>
<dbReference type="FunFam" id="2.20.25.10:FF:000002">
    <property type="entry name" value="UPF0434 protein YcaR"/>
    <property type="match status" value="1"/>
</dbReference>
<dbReference type="Gene3D" id="2.20.25.10">
    <property type="match status" value="1"/>
</dbReference>
<dbReference type="HAMAP" id="MF_01187">
    <property type="entry name" value="UPF0434"/>
    <property type="match status" value="1"/>
</dbReference>
<dbReference type="InterPro" id="IPR005651">
    <property type="entry name" value="Trm112-like"/>
</dbReference>
<dbReference type="NCBIfam" id="NF008806">
    <property type="entry name" value="PRK11827.1"/>
    <property type="match status" value="1"/>
</dbReference>
<dbReference type="PANTHER" id="PTHR33505:SF4">
    <property type="entry name" value="PROTEIN PREY, MITOCHONDRIAL"/>
    <property type="match status" value="1"/>
</dbReference>
<dbReference type="PANTHER" id="PTHR33505">
    <property type="entry name" value="ZGC:162634"/>
    <property type="match status" value="1"/>
</dbReference>
<dbReference type="Pfam" id="PF03966">
    <property type="entry name" value="Trm112p"/>
    <property type="match status" value="1"/>
</dbReference>
<dbReference type="SUPFAM" id="SSF158997">
    <property type="entry name" value="Trm112p-like"/>
    <property type="match status" value="1"/>
</dbReference>
<evidence type="ECO:0000255" key="1">
    <source>
        <dbReference type="HAMAP-Rule" id="MF_01187"/>
    </source>
</evidence>
<sequence length="60" mass="6855">MDHRLLEIIACPVCNGKLWYNQEKQELICKLDNLAFPLRDGIPVLLETEARVLTADESKS</sequence>
<accession>B7NM57</accession>
<organism>
    <name type="scientific">Escherichia coli O7:K1 (strain IAI39 / ExPEC)</name>
    <dbReference type="NCBI Taxonomy" id="585057"/>
    <lineage>
        <taxon>Bacteria</taxon>
        <taxon>Pseudomonadati</taxon>
        <taxon>Pseudomonadota</taxon>
        <taxon>Gammaproteobacteria</taxon>
        <taxon>Enterobacterales</taxon>
        <taxon>Enterobacteriaceae</taxon>
        <taxon>Escherichia</taxon>
    </lineage>
</organism>
<gene>
    <name evidence="1" type="primary">ycaR</name>
    <name type="ordered locus">ECIAI39_2230</name>
</gene>
<proteinExistence type="inferred from homology"/>
<reference key="1">
    <citation type="journal article" date="2009" name="PLoS Genet.">
        <title>Organised genome dynamics in the Escherichia coli species results in highly diverse adaptive paths.</title>
        <authorList>
            <person name="Touchon M."/>
            <person name="Hoede C."/>
            <person name="Tenaillon O."/>
            <person name="Barbe V."/>
            <person name="Baeriswyl S."/>
            <person name="Bidet P."/>
            <person name="Bingen E."/>
            <person name="Bonacorsi S."/>
            <person name="Bouchier C."/>
            <person name="Bouvet O."/>
            <person name="Calteau A."/>
            <person name="Chiapello H."/>
            <person name="Clermont O."/>
            <person name="Cruveiller S."/>
            <person name="Danchin A."/>
            <person name="Diard M."/>
            <person name="Dossat C."/>
            <person name="Karoui M.E."/>
            <person name="Frapy E."/>
            <person name="Garry L."/>
            <person name="Ghigo J.M."/>
            <person name="Gilles A.M."/>
            <person name="Johnson J."/>
            <person name="Le Bouguenec C."/>
            <person name="Lescat M."/>
            <person name="Mangenot S."/>
            <person name="Martinez-Jehanne V."/>
            <person name="Matic I."/>
            <person name="Nassif X."/>
            <person name="Oztas S."/>
            <person name="Petit M.A."/>
            <person name="Pichon C."/>
            <person name="Rouy Z."/>
            <person name="Ruf C.S."/>
            <person name="Schneider D."/>
            <person name="Tourret J."/>
            <person name="Vacherie B."/>
            <person name="Vallenet D."/>
            <person name="Medigue C."/>
            <person name="Rocha E.P.C."/>
            <person name="Denamur E."/>
        </authorList>
    </citation>
    <scope>NUCLEOTIDE SEQUENCE [LARGE SCALE GENOMIC DNA]</scope>
    <source>
        <strain>IAI39 / ExPEC</strain>
    </source>
</reference>
<feature type="chain" id="PRO_1000138304" description="UPF0434 protein YcaR">
    <location>
        <begin position="1"/>
        <end position="60"/>
    </location>
</feature>